<gene>
    <name type="primary">Ffar4</name>
    <name type="synonym">Gpr120</name>
    <name type="synonym">O3far1</name>
</gene>
<evidence type="ECO:0000250" key="1">
    <source>
        <dbReference type="UniProtKB" id="Q5NUL3"/>
    </source>
</evidence>
<evidence type="ECO:0000250" key="2">
    <source>
        <dbReference type="UniProtKB" id="Q7TMA4"/>
    </source>
</evidence>
<evidence type="ECO:0000255" key="3"/>
<evidence type="ECO:0000255" key="4">
    <source>
        <dbReference type="PROSITE-ProRule" id="PRU00521"/>
    </source>
</evidence>
<evidence type="ECO:0000256" key="5">
    <source>
        <dbReference type="SAM" id="MobiDB-lite"/>
    </source>
</evidence>
<evidence type="ECO:0000312" key="6">
    <source>
        <dbReference type="EMBL" id="BAE80312.1"/>
    </source>
</evidence>
<comment type="function">
    <text evidence="1 2">G-protein-coupled receptor for long-chain fatty acids (LCFAs) with a major role in adipogenesis, energy metabolism and inflammation. Signals via G-protein and beta-arrestin pathways. LCFAs sensing initiates activation of phosphoinositidase C-linked G proteins GNAQ and GNA11 (G(q)/G(11)), inducing a variety of cellular responses via second messenger pathways such as intracellular calcium mobilization, modulation of cyclic adenosine monophosphate (cAMP) production, and mitogen-activated protein kinases (MAPKs). After LCFAs binding, associates with beta-arrestin ARRB2 that acts as an adapter protein coupling the receptor to specific downstream signaling pathways, as well as mediating receptor endocytosis (By similarity). In response to dietary fats, plays an important role in the regulation of adipocyte proliferation and differentiation. Acts as a receptor for omega-3 polyunsaturated fatty acids (PUFAs) at primary cilium of perivascular preadipocytes, initiating an adipogenic program via cAMP and CTCF-dependent chromatin remodeling that ultimately results in transcriptional activation of adipogenic genes and cell cycle entry. Induces differentiation of brown and beige adipocytes probably via autocrine and endocrine functions of FGF21 hormone. Contributes to the thermogenic activation of brown adipose tissue and the browning of white adipose tissue. Activates brown adipocytes by initiating intracellular calcium signaling leading to mitochondrial depolarization and fission, and overall increased mitochondrial respiration. Consequently stimulates fatty acid uptake and oxidation in mitochondria together with UCP1-mediated thermogenic respiration, eventually reducing fat mass. Regulates bi-potential differentiation of bone marrow mesenchymal stem cells toward osteoblasts or adipocytes likely by up-regulating distinct integrins. In response to dietary fats regulates hormone secretion and appetite. Stimulates GIP and GLP1 secretion from enteroendocrine cells as well as GCG secretion in pancreatic alpha cells, thereby playing a role in the regulation of blood glucose levels. Negatively regulates glucose-induced SST secretion in pancreatic delta cells. Mediates LCFAs inhibition of GHRL secretion, an appetite-controlling hormone. In taste buds, contributes to sensing of dietary fatty acids by the gustatory system. During the inflammatory response, promotes anti-inflammatory M2 macrophage differentiation in adipose tissue (By similarity). Mediates the anti-inflammatory effects of omega-3 PUFAs via inhibition of NLRP3 inflammasome activation (By similarity). In this pathway, interacts with adapter protein ARRB2 and inhibits the priming step triggered by Toll-like receptors (TLRs) at the level of TAK1 and TAB1 (By similarity). Further inhibits the activation step when ARRB2 directly associates with NLRP3, leading to inhibition of pro-inflammatory cytokine release (By similarity). Mediates LCFAs anti-apoptotic effects (By similarity).</text>
</comment>
<comment type="subunit">
    <text evidence="1">Interacts (via C-terminus) with ARRB2 following LCFAs stimulation.</text>
</comment>
<comment type="subcellular location">
    <subcellularLocation>
        <location evidence="2">Cell membrane</location>
        <topology evidence="3">Multi-pass membrane protein</topology>
    </subcellularLocation>
    <subcellularLocation>
        <location evidence="1">Endosome membrane</location>
        <topology evidence="3">Multi-pass membrane protein</topology>
    </subcellularLocation>
    <subcellularLocation>
        <location evidence="1">Lysosome membrane</location>
        <topology evidence="3">Multi-pass membrane protein</topology>
    </subcellularLocation>
    <subcellularLocation>
        <location evidence="2">Cell projection</location>
        <location evidence="2">Cilium membrane</location>
        <topology evidence="3">Multi-pass membrane protein</topology>
    </subcellularLocation>
    <text evidence="1 2">Sorted to late endosome/lysosome compartments upon internalization (By similarity). Specifically localizes to the primary cilium of undifferentiated adipocytes. Ciliary trafficking is TULP3-dependent. As the cilium is lost during adipogenesis, moves to the plasma membrane (By similarity).</text>
</comment>
<comment type="PTM">
    <text evidence="1">Phosphorylated at two clusters of Ser and Thr residues located in the intracellular C-terminus. Prerequisite for FFAR4 internalization via an ARRB2-dependent pathway.</text>
</comment>
<comment type="similarity">
    <text evidence="4">Belongs to the G-protein coupled receptor 1 family.</text>
</comment>
<protein>
    <recommendedName>
        <fullName>Free fatty acid receptor 4</fullName>
    </recommendedName>
    <alternativeName>
        <fullName>G-protein coupled receptor 120</fullName>
    </alternativeName>
    <alternativeName>
        <fullName>Omega-3 fatty acid receptor 1</fullName>
    </alternativeName>
</protein>
<sequence>MSPECAQTTGPGPSRTPDQVNRTHFPFFSDVKGDHRLVLSVLETTVLGLIFVVSLLGNVCALVLVVRRRRRGATVSLVLNLFCADLLFTSAIPLVLVVRWTEAWLLGPVVCHLLFYVMTMSGSVTILTLAAVSLERMVCIVRLRRGLSGPGRRTQAALLAFIWGYSALAALPLCILFRVVPQRLPGGDQEIPICTLDWPNRIGEISWDVFFVTLNFLVPGLVIVISYSKILQITKASRKRLTLSLAYSESHQIRVSQQDYRLFRTLFLLMVSFFIMWSPIIITILLILIQNFRQDLVIWPSLFFWVVAFTFANSALNPILYNMSLFRSEWRKIFCCFFFPEKGAIFTETSIRRNDLSVIST</sequence>
<reference evidence="6" key="1">
    <citation type="submission" date="2005-03" db="EMBL/GenBank/DDBJ databases">
        <title>Cloning and characterization of rat GPR120.</title>
        <authorList>
            <person name="Yano T."/>
            <person name="Katsuma S."/>
            <person name="Hirasawa A."/>
            <person name="Tsujimoto G."/>
        </authorList>
    </citation>
    <scope>NUCLEOTIDE SEQUENCE [MRNA]</scope>
</reference>
<keyword id="KW-1003">Cell membrane</keyword>
<keyword id="KW-0966">Cell projection</keyword>
<keyword id="KW-0221">Differentiation</keyword>
<keyword id="KW-1015">Disulfide bond</keyword>
<keyword id="KW-0967">Endosome</keyword>
<keyword id="KW-0297">G-protein coupled receptor</keyword>
<keyword id="KW-0325">Glycoprotein</keyword>
<keyword id="KW-0395">Inflammatory response</keyword>
<keyword id="KW-0446">Lipid-binding</keyword>
<keyword id="KW-0458">Lysosome</keyword>
<keyword id="KW-0472">Membrane</keyword>
<keyword id="KW-0597">Phosphoprotein</keyword>
<keyword id="KW-0675">Receptor</keyword>
<keyword id="KW-1185">Reference proteome</keyword>
<keyword id="KW-0807">Transducer</keyword>
<keyword id="KW-0812">Transmembrane</keyword>
<keyword id="KW-1133">Transmembrane helix</keyword>
<accession>Q2AC31</accession>
<feature type="chain" id="PRO_0000262961" description="Free fatty acid receptor 4">
    <location>
        <begin position="1"/>
        <end position="361"/>
    </location>
</feature>
<feature type="topological domain" description="Extracellular" evidence="3">
    <location>
        <begin position="1"/>
        <end position="45"/>
    </location>
</feature>
<feature type="transmembrane region" description="Helical; Name=1" evidence="3">
    <location>
        <begin position="46"/>
        <end position="66"/>
    </location>
</feature>
<feature type="topological domain" description="Cytoplasmic" evidence="3">
    <location>
        <begin position="67"/>
        <end position="77"/>
    </location>
</feature>
<feature type="transmembrane region" description="Helical; Name=2" evidence="3">
    <location>
        <begin position="78"/>
        <end position="98"/>
    </location>
</feature>
<feature type="topological domain" description="Extracellular" evidence="3">
    <location>
        <begin position="99"/>
        <end position="103"/>
    </location>
</feature>
<feature type="transmembrane region" description="Helical; Name=3" evidence="3">
    <location>
        <begin position="104"/>
        <end position="124"/>
    </location>
</feature>
<feature type="topological domain" description="Cytoplasmic" evidence="3">
    <location>
        <begin position="125"/>
        <end position="156"/>
    </location>
</feature>
<feature type="transmembrane region" description="Helical; Name=4" evidence="3">
    <location>
        <begin position="157"/>
        <end position="177"/>
    </location>
</feature>
<feature type="topological domain" description="Extracellular" evidence="3">
    <location>
        <begin position="178"/>
        <end position="204"/>
    </location>
</feature>
<feature type="transmembrane region" description="Helical; Name=5" evidence="3">
    <location>
        <begin position="205"/>
        <end position="225"/>
    </location>
</feature>
<feature type="topological domain" description="Cytoplasmic" evidence="3">
    <location>
        <begin position="226"/>
        <end position="268"/>
    </location>
</feature>
<feature type="transmembrane region" description="Helical; Name=6" evidence="3">
    <location>
        <begin position="269"/>
        <end position="289"/>
    </location>
</feature>
<feature type="topological domain" description="Extracellular" evidence="3">
    <location>
        <begin position="290"/>
        <end position="295"/>
    </location>
</feature>
<feature type="transmembrane region" description="Helical; Name=7" evidence="3">
    <location>
        <begin position="296"/>
        <end position="316"/>
    </location>
</feature>
<feature type="topological domain" description="Cytoplasmic" evidence="3">
    <location>
        <begin position="317"/>
        <end position="361"/>
    </location>
</feature>
<feature type="region of interest" description="Disordered" evidence="5">
    <location>
        <begin position="1"/>
        <end position="21"/>
    </location>
</feature>
<feature type="modified residue" description="Phosphothreonine" evidence="1">
    <location>
        <position position="347"/>
    </location>
</feature>
<feature type="modified residue" description="Phosphothreonine" evidence="1">
    <location>
        <position position="349"/>
    </location>
</feature>
<feature type="modified residue" description="Phosphoserine" evidence="1">
    <location>
        <position position="350"/>
    </location>
</feature>
<feature type="modified residue" description="Phosphoserine" evidence="1">
    <location>
        <position position="357"/>
    </location>
</feature>
<feature type="modified residue" description="Phosphoserine" evidence="1">
    <location>
        <position position="360"/>
    </location>
</feature>
<feature type="glycosylation site" description="N-linked (GlcNAc...) asparagine" evidence="3">
    <location>
        <position position="21"/>
    </location>
</feature>
<feature type="disulfide bond" evidence="4">
    <location>
        <begin position="111"/>
        <end position="194"/>
    </location>
</feature>
<dbReference type="EMBL" id="AB207868">
    <property type="protein sequence ID" value="BAE80312.1"/>
    <property type="molecule type" value="mRNA"/>
</dbReference>
<dbReference type="RefSeq" id="NP_001040553.1">
    <property type="nucleotide sequence ID" value="NM_001047088.1"/>
</dbReference>
<dbReference type="SMR" id="Q2AC31"/>
<dbReference type="FunCoup" id="Q2AC31">
    <property type="interactions" value="31"/>
</dbReference>
<dbReference type="STRING" id="10116.ENSRNOP00000032715"/>
<dbReference type="BindingDB" id="Q2AC31"/>
<dbReference type="ChEMBL" id="CHEMBL3309099"/>
<dbReference type="GuidetoPHARMACOLOGY" id="127"/>
<dbReference type="GlyCosmos" id="Q2AC31">
    <property type="glycosylation" value="1 site, No reported glycans"/>
</dbReference>
<dbReference type="GlyGen" id="Q2AC31">
    <property type="glycosylation" value="1 site"/>
</dbReference>
<dbReference type="PhosphoSitePlus" id="Q2AC31"/>
<dbReference type="PaxDb" id="10116-ENSRNOP00000032715"/>
<dbReference type="Ensembl" id="ENSRNOT00000034563.5">
    <property type="protein sequence ID" value="ENSRNOP00000032715.4"/>
    <property type="gene ID" value="ENSRNOG00000021763.5"/>
</dbReference>
<dbReference type="GeneID" id="294075"/>
<dbReference type="KEGG" id="rno:294075"/>
<dbReference type="UCSC" id="RGD:1308252">
    <property type="organism name" value="rat"/>
</dbReference>
<dbReference type="AGR" id="RGD:1308252"/>
<dbReference type="CTD" id="338557"/>
<dbReference type="RGD" id="1308252">
    <property type="gene designation" value="Ffar4"/>
</dbReference>
<dbReference type="eggNOG" id="KOG3656">
    <property type="taxonomic scope" value="Eukaryota"/>
</dbReference>
<dbReference type="GeneTree" id="ENSGT01130000278263"/>
<dbReference type="HOGENOM" id="CLU_061487_0_0_1"/>
<dbReference type="InParanoid" id="Q2AC31"/>
<dbReference type="OMA" id="LYNMALF"/>
<dbReference type="OrthoDB" id="9880339at2759"/>
<dbReference type="PhylomeDB" id="Q2AC31"/>
<dbReference type="TreeFam" id="TF336844"/>
<dbReference type="Reactome" id="R-RNO-381771">
    <property type="pathway name" value="Synthesis, secretion, and inactivation of Glucagon-like Peptide-1 (GLP-1)"/>
</dbReference>
<dbReference type="Reactome" id="R-RNO-416476">
    <property type="pathway name" value="G alpha (q) signalling events"/>
</dbReference>
<dbReference type="PRO" id="PR:Q2AC31"/>
<dbReference type="Proteomes" id="UP000002494">
    <property type="component" value="Chromosome 1"/>
</dbReference>
<dbReference type="Bgee" id="ENSRNOG00000021763">
    <property type="expression patterns" value="Expressed in colon and 9 other cell types or tissues"/>
</dbReference>
<dbReference type="GO" id="GO:0036064">
    <property type="term" value="C:ciliary basal body"/>
    <property type="evidence" value="ECO:0007669"/>
    <property type="project" value="Ensembl"/>
</dbReference>
<dbReference type="GO" id="GO:0060170">
    <property type="term" value="C:ciliary membrane"/>
    <property type="evidence" value="ECO:0007669"/>
    <property type="project" value="UniProtKB-SubCell"/>
</dbReference>
<dbReference type="GO" id="GO:0005929">
    <property type="term" value="C:cilium"/>
    <property type="evidence" value="ECO:0000250"/>
    <property type="project" value="UniProtKB"/>
</dbReference>
<dbReference type="GO" id="GO:0030139">
    <property type="term" value="C:endocytic vesicle"/>
    <property type="evidence" value="ECO:0000266"/>
    <property type="project" value="RGD"/>
</dbReference>
<dbReference type="GO" id="GO:0010008">
    <property type="term" value="C:endosome membrane"/>
    <property type="evidence" value="ECO:0000266"/>
    <property type="project" value="RGD"/>
</dbReference>
<dbReference type="GO" id="GO:0005765">
    <property type="term" value="C:lysosomal membrane"/>
    <property type="evidence" value="ECO:0000266"/>
    <property type="project" value="RGD"/>
</dbReference>
<dbReference type="GO" id="GO:0005886">
    <property type="term" value="C:plasma membrane"/>
    <property type="evidence" value="ECO:0000250"/>
    <property type="project" value="UniProtKB"/>
</dbReference>
<dbReference type="GO" id="GO:1990763">
    <property type="term" value="F:arrestin family protein binding"/>
    <property type="evidence" value="ECO:0000266"/>
    <property type="project" value="RGD"/>
</dbReference>
<dbReference type="GO" id="GO:0005504">
    <property type="term" value="F:fatty acid binding"/>
    <property type="evidence" value="ECO:0000250"/>
    <property type="project" value="UniProtKB"/>
</dbReference>
<dbReference type="GO" id="GO:0004930">
    <property type="term" value="F:G protein-coupled receptor activity"/>
    <property type="evidence" value="ECO:0000266"/>
    <property type="project" value="RGD"/>
</dbReference>
<dbReference type="GO" id="GO:0008527">
    <property type="term" value="F:taste receptor activity"/>
    <property type="evidence" value="ECO:0000266"/>
    <property type="project" value="RGD"/>
</dbReference>
<dbReference type="GO" id="GO:0007189">
    <property type="term" value="P:adenylate cyclase-activating G protein-coupled receptor signaling pathway"/>
    <property type="evidence" value="ECO:0000250"/>
    <property type="project" value="UniProtKB"/>
</dbReference>
<dbReference type="GO" id="GO:0050873">
    <property type="term" value="P:brown fat cell differentiation"/>
    <property type="evidence" value="ECO:0000250"/>
    <property type="project" value="UniProtKB"/>
</dbReference>
<dbReference type="GO" id="GO:0045444">
    <property type="term" value="P:fat cell differentiation"/>
    <property type="evidence" value="ECO:0000266"/>
    <property type="project" value="RGD"/>
</dbReference>
<dbReference type="GO" id="GO:0007186">
    <property type="term" value="P:G protein-coupled receptor signaling pathway"/>
    <property type="evidence" value="ECO:0000314"/>
    <property type="project" value="CACAO"/>
</dbReference>
<dbReference type="GO" id="GO:0036321">
    <property type="term" value="P:ghrelin secretion"/>
    <property type="evidence" value="ECO:0000250"/>
    <property type="project" value="UniProtKB"/>
</dbReference>
<dbReference type="GO" id="GO:0046879">
    <property type="term" value="P:hormone secretion"/>
    <property type="evidence" value="ECO:0000266"/>
    <property type="project" value="RGD"/>
</dbReference>
<dbReference type="GO" id="GO:0006954">
    <property type="term" value="P:inflammatory response"/>
    <property type="evidence" value="ECO:0007669"/>
    <property type="project" value="UniProtKB-KW"/>
</dbReference>
<dbReference type="GO" id="GO:0043066">
    <property type="term" value="P:negative regulation of apoptotic process"/>
    <property type="evidence" value="ECO:0000250"/>
    <property type="project" value="UniProtKB"/>
</dbReference>
<dbReference type="GO" id="GO:0001818">
    <property type="term" value="P:negative regulation of cytokine production"/>
    <property type="evidence" value="ECO:0000250"/>
    <property type="project" value="UniProtKB"/>
</dbReference>
<dbReference type="GO" id="GO:0050728">
    <property type="term" value="P:negative regulation of inflammatory response"/>
    <property type="evidence" value="ECO:0000250"/>
    <property type="project" value="UniProtKB"/>
</dbReference>
<dbReference type="GO" id="GO:0032691">
    <property type="term" value="P:negative regulation of interleukin-1 beta production"/>
    <property type="evidence" value="ECO:0000266"/>
    <property type="project" value="RGD"/>
</dbReference>
<dbReference type="GO" id="GO:0090275">
    <property type="term" value="P:negative regulation of somatostatin secretion"/>
    <property type="evidence" value="ECO:0000250"/>
    <property type="project" value="UniProtKB"/>
</dbReference>
<dbReference type="GO" id="GO:0007200">
    <property type="term" value="P:phospholipase C-activating G protein-coupled receptor signaling pathway"/>
    <property type="evidence" value="ECO:0000250"/>
    <property type="project" value="UniProtKB"/>
</dbReference>
<dbReference type="GO" id="GO:0090336">
    <property type="term" value="P:positive regulation of brown fat cell differentiation"/>
    <property type="evidence" value="ECO:0000266"/>
    <property type="project" value="RGD"/>
</dbReference>
<dbReference type="GO" id="GO:0120162">
    <property type="term" value="P:positive regulation of cold-induced thermogenesis"/>
    <property type="evidence" value="ECO:0000250"/>
    <property type="project" value="YuBioLab"/>
</dbReference>
<dbReference type="GO" id="GO:0007204">
    <property type="term" value="P:positive regulation of cytosolic calcium ion concentration"/>
    <property type="evidence" value="ECO:0000266"/>
    <property type="project" value="RGD"/>
</dbReference>
<dbReference type="GO" id="GO:0070374">
    <property type="term" value="P:positive regulation of ERK1 and ERK2 cascade"/>
    <property type="evidence" value="ECO:0000250"/>
    <property type="project" value="UniProtKB"/>
</dbReference>
<dbReference type="GO" id="GO:0070094">
    <property type="term" value="P:positive regulation of glucagon secretion"/>
    <property type="evidence" value="ECO:0000250"/>
    <property type="project" value="UniProtKB"/>
</dbReference>
<dbReference type="GO" id="GO:0045669">
    <property type="term" value="P:positive regulation of osteoblast differentiation"/>
    <property type="evidence" value="ECO:0000250"/>
    <property type="project" value="UniProtKB"/>
</dbReference>
<dbReference type="GO" id="GO:0010827">
    <property type="term" value="P:regulation of D-glucose transmembrane transport"/>
    <property type="evidence" value="ECO:0000250"/>
    <property type="project" value="UniProtKB"/>
</dbReference>
<dbReference type="GO" id="GO:0050872">
    <property type="term" value="P:white fat cell differentiation"/>
    <property type="evidence" value="ECO:0000250"/>
    <property type="project" value="UniProtKB"/>
</dbReference>
<dbReference type="CDD" id="cd00637">
    <property type="entry name" value="7tm_classA_rhodopsin-like"/>
    <property type="match status" value="1"/>
</dbReference>
<dbReference type="FunFam" id="1.20.1070.10:FF:000170">
    <property type="entry name" value="Free fatty acid receptor 4"/>
    <property type="match status" value="1"/>
</dbReference>
<dbReference type="Gene3D" id="1.20.1070.10">
    <property type="entry name" value="Rhodopsin 7-helix transmembrane proteins"/>
    <property type="match status" value="1"/>
</dbReference>
<dbReference type="InterPro" id="IPR000276">
    <property type="entry name" value="GPCR_Rhodpsn"/>
</dbReference>
<dbReference type="InterPro" id="IPR017452">
    <property type="entry name" value="GPCR_Rhodpsn_7TM"/>
</dbReference>
<dbReference type="PANTHER" id="PTHR45695:SF37">
    <property type="entry name" value="FREE FATTY ACID RECEPTOR 4-LIKE"/>
    <property type="match status" value="1"/>
</dbReference>
<dbReference type="PANTHER" id="PTHR45695">
    <property type="entry name" value="LEUCOKININ RECEPTOR-RELATED"/>
    <property type="match status" value="1"/>
</dbReference>
<dbReference type="Pfam" id="PF00001">
    <property type="entry name" value="7tm_1"/>
    <property type="match status" value="1"/>
</dbReference>
<dbReference type="PRINTS" id="PR00237">
    <property type="entry name" value="GPCRRHODOPSN"/>
</dbReference>
<dbReference type="SUPFAM" id="SSF81321">
    <property type="entry name" value="Family A G protein-coupled receptor-like"/>
    <property type="match status" value="1"/>
</dbReference>
<dbReference type="PROSITE" id="PS50262">
    <property type="entry name" value="G_PROTEIN_RECEP_F1_2"/>
    <property type="match status" value="1"/>
</dbReference>
<name>FFAR4_RAT</name>
<organism>
    <name type="scientific">Rattus norvegicus</name>
    <name type="common">Rat</name>
    <dbReference type="NCBI Taxonomy" id="10116"/>
    <lineage>
        <taxon>Eukaryota</taxon>
        <taxon>Metazoa</taxon>
        <taxon>Chordata</taxon>
        <taxon>Craniata</taxon>
        <taxon>Vertebrata</taxon>
        <taxon>Euteleostomi</taxon>
        <taxon>Mammalia</taxon>
        <taxon>Eutheria</taxon>
        <taxon>Euarchontoglires</taxon>
        <taxon>Glires</taxon>
        <taxon>Rodentia</taxon>
        <taxon>Myomorpha</taxon>
        <taxon>Muroidea</taxon>
        <taxon>Muridae</taxon>
        <taxon>Murinae</taxon>
        <taxon>Rattus</taxon>
    </lineage>
</organism>
<proteinExistence type="evidence at transcript level"/>